<protein>
    <recommendedName>
        <fullName evidence="6">Translation initiation factor eIF2 assembly protein</fullName>
    </recommendedName>
    <alternativeName>
        <fullName>Cell division cycle protein 123 homolog</fullName>
    </alternativeName>
</protein>
<gene>
    <name type="primary">cdc123</name>
    <name type="ORF">DDB_G0276129</name>
</gene>
<organism>
    <name type="scientific">Dictyostelium discoideum</name>
    <name type="common">Social amoeba</name>
    <dbReference type="NCBI Taxonomy" id="44689"/>
    <lineage>
        <taxon>Eukaryota</taxon>
        <taxon>Amoebozoa</taxon>
        <taxon>Evosea</taxon>
        <taxon>Eumycetozoa</taxon>
        <taxon>Dictyostelia</taxon>
        <taxon>Dictyosteliales</taxon>
        <taxon>Dictyosteliaceae</taxon>
        <taxon>Dictyostelium</taxon>
    </lineage>
</organism>
<accession>Q75JF9</accession>
<accession>Q552G1</accession>
<feature type="chain" id="PRO_0000331560" description="Translation initiation factor eIF2 assembly protein">
    <location>
        <begin position="1"/>
        <end position="384"/>
    </location>
</feature>
<feature type="region of interest" description="Disordered" evidence="5">
    <location>
        <begin position="90"/>
        <end position="115"/>
    </location>
</feature>
<feature type="compositionally biased region" description="Acidic residues" evidence="5">
    <location>
        <begin position="92"/>
        <end position="105"/>
    </location>
</feature>
<feature type="compositionally biased region" description="Basic and acidic residues" evidence="5">
    <location>
        <begin position="106"/>
        <end position="115"/>
    </location>
</feature>
<feature type="binding site" evidence="1">
    <location>
        <position position="143"/>
    </location>
    <ligand>
        <name>ATP</name>
        <dbReference type="ChEBI" id="CHEBI:30616"/>
    </ligand>
</feature>
<feature type="binding site" evidence="1">
    <location>
        <position position="146"/>
    </location>
    <ligand>
        <name>ATP</name>
        <dbReference type="ChEBI" id="CHEBI:30616"/>
    </ligand>
</feature>
<feature type="binding site" evidence="4">
    <location>
        <position position="148"/>
    </location>
    <ligand>
        <name>ATP</name>
        <dbReference type="ChEBI" id="CHEBI:30616"/>
    </ligand>
</feature>
<feature type="binding site" evidence="4">
    <location>
        <position position="150"/>
    </location>
    <ligand>
        <name>ATP</name>
        <dbReference type="ChEBI" id="CHEBI:30616"/>
    </ligand>
</feature>
<feature type="binding site" evidence="4">
    <location>
        <position position="205"/>
    </location>
    <ligand>
        <name>ATP</name>
        <dbReference type="ChEBI" id="CHEBI:30616"/>
    </ligand>
</feature>
<feature type="binding site" evidence="1">
    <location>
        <position position="206"/>
    </location>
    <ligand>
        <name>ATP</name>
        <dbReference type="ChEBI" id="CHEBI:30616"/>
    </ligand>
</feature>
<feature type="binding site" evidence="4">
    <location>
        <position position="207"/>
    </location>
    <ligand>
        <name>ATP</name>
        <dbReference type="ChEBI" id="CHEBI:30616"/>
    </ligand>
</feature>
<feature type="binding site" evidence="1">
    <location>
        <position position="215"/>
    </location>
    <ligand>
        <name>ATP</name>
        <dbReference type="ChEBI" id="CHEBI:30616"/>
    </ligand>
</feature>
<feature type="binding site" evidence="1">
    <location>
        <position position="217"/>
    </location>
    <ligand>
        <name>ATP</name>
        <dbReference type="ChEBI" id="CHEBI:30616"/>
    </ligand>
</feature>
<feature type="binding site" evidence="1">
    <location>
        <position position="231"/>
    </location>
    <ligand>
        <name>ATP</name>
        <dbReference type="ChEBI" id="CHEBI:30616"/>
    </ligand>
</feature>
<feature type="binding site" evidence="4">
    <location>
        <position position="271"/>
    </location>
    <ligand>
        <name>ATP</name>
        <dbReference type="ChEBI" id="CHEBI:30616"/>
    </ligand>
</feature>
<feature type="binding site" evidence="1">
    <location>
        <position position="284"/>
    </location>
    <ligand>
        <name>ATP</name>
        <dbReference type="ChEBI" id="CHEBI:30616"/>
    </ligand>
</feature>
<feature type="binding site" evidence="1">
    <location>
        <position position="284"/>
    </location>
    <ligand>
        <name>Mg(2+)</name>
        <dbReference type="ChEBI" id="CHEBI:18420"/>
    </ligand>
</feature>
<feature type="binding site" evidence="1">
    <location>
        <position position="286"/>
    </location>
    <ligand>
        <name>ATP</name>
        <dbReference type="ChEBI" id="CHEBI:30616"/>
    </ligand>
</feature>
<feature type="binding site" evidence="1">
    <location>
        <position position="286"/>
    </location>
    <ligand>
        <name>Mg(2+)</name>
        <dbReference type="ChEBI" id="CHEBI:18420"/>
    </ligand>
</feature>
<reference key="1">
    <citation type="journal article" date="2002" name="Nature">
        <title>Sequence and analysis of chromosome 2 of Dictyostelium discoideum.</title>
        <authorList>
            <person name="Gloeckner G."/>
            <person name="Eichinger L."/>
            <person name="Szafranski K."/>
            <person name="Pachebat J.A."/>
            <person name="Bankier A.T."/>
            <person name="Dear P.H."/>
            <person name="Lehmann R."/>
            <person name="Baumgart C."/>
            <person name="Parra G."/>
            <person name="Abril J.F."/>
            <person name="Guigo R."/>
            <person name="Kumpf K."/>
            <person name="Tunggal B."/>
            <person name="Cox E.C."/>
            <person name="Quail M.A."/>
            <person name="Platzer M."/>
            <person name="Rosenthal A."/>
            <person name="Noegel A.A."/>
        </authorList>
    </citation>
    <scope>NUCLEOTIDE SEQUENCE [LARGE SCALE GENOMIC DNA]</scope>
    <source>
        <strain>AX4</strain>
    </source>
</reference>
<reference key="2">
    <citation type="journal article" date="2005" name="Nature">
        <title>The genome of the social amoeba Dictyostelium discoideum.</title>
        <authorList>
            <person name="Eichinger L."/>
            <person name="Pachebat J.A."/>
            <person name="Gloeckner G."/>
            <person name="Rajandream M.A."/>
            <person name="Sucgang R."/>
            <person name="Berriman M."/>
            <person name="Song J."/>
            <person name="Olsen R."/>
            <person name="Szafranski K."/>
            <person name="Xu Q."/>
            <person name="Tunggal B."/>
            <person name="Kummerfeld S."/>
            <person name="Madera M."/>
            <person name="Konfortov B.A."/>
            <person name="Rivero F."/>
            <person name="Bankier A.T."/>
            <person name="Lehmann R."/>
            <person name="Hamlin N."/>
            <person name="Davies R."/>
            <person name="Gaudet P."/>
            <person name="Fey P."/>
            <person name="Pilcher K."/>
            <person name="Chen G."/>
            <person name="Saunders D."/>
            <person name="Sodergren E.J."/>
            <person name="Davis P."/>
            <person name="Kerhornou A."/>
            <person name="Nie X."/>
            <person name="Hall N."/>
            <person name="Anjard C."/>
            <person name="Hemphill L."/>
            <person name="Bason N."/>
            <person name="Farbrother P."/>
            <person name="Desany B."/>
            <person name="Just E."/>
            <person name="Morio T."/>
            <person name="Rost R."/>
            <person name="Churcher C.M."/>
            <person name="Cooper J."/>
            <person name="Haydock S."/>
            <person name="van Driessche N."/>
            <person name="Cronin A."/>
            <person name="Goodhead I."/>
            <person name="Muzny D.M."/>
            <person name="Mourier T."/>
            <person name="Pain A."/>
            <person name="Lu M."/>
            <person name="Harper D."/>
            <person name="Lindsay R."/>
            <person name="Hauser H."/>
            <person name="James K.D."/>
            <person name="Quiles M."/>
            <person name="Madan Babu M."/>
            <person name="Saito T."/>
            <person name="Buchrieser C."/>
            <person name="Wardroper A."/>
            <person name="Felder M."/>
            <person name="Thangavelu M."/>
            <person name="Johnson D."/>
            <person name="Knights A."/>
            <person name="Loulseged H."/>
            <person name="Mungall K.L."/>
            <person name="Oliver K."/>
            <person name="Price C."/>
            <person name="Quail M.A."/>
            <person name="Urushihara H."/>
            <person name="Hernandez J."/>
            <person name="Rabbinowitsch E."/>
            <person name="Steffen D."/>
            <person name="Sanders M."/>
            <person name="Ma J."/>
            <person name="Kohara Y."/>
            <person name="Sharp S."/>
            <person name="Simmonds M.N."/>
            <person name="Spiegler S."/>
            <person name="Tivey A."/>
            <person name="Sugano S."/>
            <person name="White B."/>
            <person name="Walker D."/>
            <person name="Woodward J.R."/>
            <person name="Winckler T."/>
            <person name="Tanaka Y."/>
            <person name="Shaulsky G."/>
            <person name="Schleicher M."/>
            <person name="Weinstock G.M."/>
            <person name="Rosenthal A."/>
            <person name="Cox E.C."/>
            <person name="Chisholm R.L."/>
            <person name="Gibbs R.A."/>
            <person name="Loomis W.F."/>
            <person name="Platzer M."/>
            <person name="Kay R.R."/>
            <person name="Williams J.G."/>
            <person name="Dear P.H."/>
            <person name="Noegel A.A."/>
            <person name="Barrell B.G."/>
            <person name="Kuspa A."/>
        </authorList>
    </citation>
    <scope>NUCLEOTIDE SEQUENCE [LARGE SCALE GENOMIC DNA]</scope>
    <source>
        <strain>AX4</strain>
    </source>
</reference>
<dbReference type="EMBL" id="AAFI02000014">
    <property type="protein sequence ID" value="EAL69364.1"/>
    <property type="molecule type" value="Genomic_DNA"/>
</dbReference>
<dbReference type="RefSeq" id="XP_643249.1">
    <property type="nucleotide sequence ID" value="XM_638157.1"/>
</dbReference>
<dbReference type="SMR" id="Q75JF9"/>
<dbReference type="FunCoup" id="Q75JF9">
    <property type="interactions" value="318"/>
</dbReference>
<dbReference type="STRING" id="44689.Q75JF9"/>
<dbReference type="PaxDb" id="44689-DDB0266706"/>
<dbReference type="EnsemblProtists" id="EAL69364">
    <property type="protein sequence ID" value="EAL69364"/>
    <property type="gene ID" value="DDB_G0276129"/>
</dbReference>
<dbReference type="GeneID" id="8620292"/>
<dbReference type="KEGG" id="ddi:DDB_G0276129"/>
<dbReference type="dictyBase" id="DDB_G0276129">
    <property type="gene designation" value="cdc123"/>
</dbReference>
<dbReference type="VEuPathDB" id="AmoebaDB:DDB_G0276129"/>
<dbReference type="eggNOG" id="KOG2983">
    <property type="taxonomic scope" value="Eukaryota"/>
</dbReference>
<dbReference type="HOGENOM" id="CLU_034402_2_0_1"/>
<dbReference type="InParanoid" id="Q75JF9"/>
<dbReference type="OMA" id="TFPDPNF"/>
<dbReference type="PhylomeDB" id="Q75JF9"/>
<dbReference type="PRO" id="PR:Q75JF9"/>
<dbReference type="Proteomes" id="UP000002195">
    <property type="component" value="Chromosome 2"/>
</dbReference>
<dbReference type="GO" id="GO:0005737">
    <property type="term" value="C:cytoplasm"/>
    <property type="evidence" value="ECO:0000250"/>
    <property type="project" value="UniProtKB"/>
</dbReference>
<dbReference type="GO" id="GO:0005524">
    <property type="term" value="F:ATP binding"/>
    <property type="evidence" value="ECO:0000250"/>
    <property type="project" value="UniProtKB"/>
</dbReference>
<dbReference type="GO" id="GO:0000287">
    <property type="term" value="F:magnesium ion binding"/>
    <property type="evidence" value="ECO:0000250"/>
    <property type="project" value="UniProtKB"/>
</dbReference>
<dbReference type="GO" id="GO:0044183">
    <property type="term" value="F:protein folding chaperone"/>
    <property type="evidence" value="ECO:0000250"/>
    <property type="project" value="UniProtKB"/>
</dbReference>
<dbReference type="GO" id="GO:1905143">
    <property type="term" value="P:eukaryotic translation initiation factor 2 complex assembly"/>
    <property type="evidence" value="ECO:0000250"/>
    <property type="project" value="UniProtKB"/>
</dbReference>
<dbReference type="InterPro" id="IPR009772">
    <property type="entry name" value="CDC123"/>
</dbReference>
<dbReference type="PANTHER" id="PTHR15323:SF6">
    <property type="entry name" value="CELL DIVISION CYCLE PROTEIN 123 HOMOLOG"/>
    <property type="match status" value="1"/>
</dbReference>
<dbReference type="PANTHER" id="PTHR15323">
    <property type="entry name" value="D123 PROTEIN"/>
    <property type="match status" value="1"/>
</dbReference>
<dbReference type="Pfam" id="PF07065">
    <property type="entry name" value="D123"/>
    <property type="match status" value="1"/>
</dbReference>
<comment type="function">
    <text evidence="1 2">ATP-dependent protein-folding chaperone for the eIF2 complex (By similarity). Binds to the gamma subunit of the eIF2 complex which allows the subunit to assemble with the alpha and beta subunits (By similarity).</text>
</comment>
<comment type="subcellular location">
    <subcellularLocation>
        <location evidence="3">Cytoplasm</location>
    </subcellularLocation>
</comment>
<comment type="similarity">
    <text evidence="6">Belongs to the CDC123 family.</text>
</comment>
<name>CD123_DICDI</name>
<keyword id="KW-0067">ATP-binding</keyword>
<keyword id="KW-0143">Chaperone</keyword>
<keyword id="KW-0963">Cytoplasm</keyword>
<keyword id="KW-0460">Magnesium</keyword>
<keyword id="KW-0479">Metal-binding</keyword>
<keyword id="KW-0547">Nucleotide-binding</keyword>
<keyword id="KW-1185">Reference proteome</keyword>
<proteinExistence type="inferred from homology"/>
<evidence type="ECO:0000250" key="1">
    <source>
        <dbReference type="UniProtKB" id="O75794"/>
    </source>
</evidence>
<evidence type="ECO:0000250" key="2">
    <source>
        <dbReference type="UniProtKB" id="Q05791"/>
    </source>
</evidence>
<evidence type="ECO:0000250" key="3">
    <source>
        <dbReference type="UniProtKB" id="Q62834"/>
    </source>
</evidence>
<evidence type="ECO:0000250" key="4">
    <source>
        <dbReference type="UniProtKB" id="Q9P7N5"/>
    </source>
</evidence>
<evidence type="ECO:0000256" key="5">
    <source>
        <dbReference type="SAM" id="MobiDB-lite"/>
    </source>
</evidence>
<evidence type="ECO:0000305" key="6"/>
<sequence length="384" mass="45038">MEKHDIKYFENKKQCQFQEWYEKFKSVTFSSIVIPLPKIFIDYLQSDQFTTPHEGFPEFKVDEHDDLFDDNNWSTSKNHISTLDPKYYQGYSDEEDESSDDDDSNDNDKDKKPKRIVNETEFKELSNQIIKSIEKLGGNIFPKLNWSSPKDASWMNVYNSLKCTNTTDIYLLLKSSDFINHDLMQFSINQDDKDDSLTPYVLVLRKWQNLQPSMEFRCFVKDNQLLGISQRDISTYFKFLKDKKQKIQDAIVKFYNESICGKFSNNSFTFDCYVTKDEQVWLIDFNPIHPSTEALLFVWDELIPELIEQDQDEKENEETKQAKEELPIEPLTKLEFRIIDDESGIKPNLAMTSRLPLDLLQSSGGTGQGNINDILLNFKNQNLN</sequence>